<protein>
    <recommendedName>
        <fullName evidence="1">Ribosome-recycling factor</fullName>
        <shortName evidence="1">RRF</shortName>
    </recommendedName>
    <alternativeName>
        <fullName evidence="1">Ribosome-releasing factor</fullName>
    </alternativeName>
</protein>
<sequence>MSEEFELDTDDLKRRMDGAMANLKTEFASLRTGRASASMLEPVMVDAYGSMTPINQVGTVNVPEPRMVTINVWDKGLVGKVEKAIRESGLGINPQLNGTIIMLPIPELNEERRRELTKVAGQYAEHARVSIRNVRRDGMDQIKKAKADGMSEDDQKFWETEVQELTDKMIKAVDAALETKQAEIMQV</sequence>
<name>RRF_RUEST</name>
<gene>
    <name evidence="1" type="primary">frr</name>
    <name type="ordered locus">TM1040_1413</name>
</gene>
<proteinExistence type="inferred from homology"/>
<comment type="function">
    <text evidence="1">Responsible for the release of ribosomes from messenger RNA at the termination of protein biosynthesis. May increase the efficiency of translation by recycling ribosomes from one round of translation to another.</text>
</comment>
<comment type="subcellular location">
    <subcellularLocation>
        <location evidence="1">Cytoplasm</location>
    </subcellularLocation>
</comment>
<comment type="similarity">
    <text evidence="1">Belongs to the RRF family.</text>
</comment>
<evidence type="ECO:0000255" key="1">
    <source>
        <dbReference type="HAMAP-Rule" id="MF_00040"/>
    </source>
</evidence>
<feature type="chain" id="PRO_1000003270" description="Ribosome-recycling factor">
    <location>
        <begin position="1"/>
        <end position="187"/>
    </location>
</feature>
<reference key="1">
    <citation type="submission" date="2006-05" db="EMBL/GenBank/DDBJ databases">
        <title>Complete sequence of chromosome of Silicibacter sp. TM1040.</title>
        <authorList>
            <consortium name="US DOE Joint Genome Institute"/>
            <person name="Copeland A."/>
            <person name="Lucas S."/>
            <person name="Lapidus A."/>
            <person name="Barry K."/>
            <person name="Detter J.C."/>
            <person name="Glavina del Rio T."/>
            <person name="Hammon N."/>
            <person name="Israni S."/>
            <person name="Dalin E."/>
            <person name="Tice H."/>
            <person name="Pitluck S."/>
            <person name="Brettin T."/>
            <person name="Bruce D."/>
            <person name="Han C."/>
            <person name="Tapia R."/>
            <person name="Goodwin L."/>
            <person name="Thompson L.S."/>
            <person name="Gilna P."/>
            <person name="Schmutz J."/>
            <person name="Larimer F."/>
            <person name="Land M."/>
            <person name="Hauser L."/>
            <person name="Kyrpides N."/>
            <person name="Kim E."/>
            <person name="Belas R."/>
            <person name="Moran M.A."/>
            <person name="Buchan A."/>
            <person name="Gonzalez J.M."/>
            <person name="Schell M.A."/>
            <person name="Sun F."/>
            <person name="Richardson P."/>
        </authorList>
    </citation>
    <scope>NUCLEOTIDE SEQUENCE [LARGE SCALE GENOMIC DNA]</scope>
    <source>
        <strain>TM1040</strain>
    </source>
</reference>
<keyword id="KW-0963">Cytoplasm</keyword>
<keyword id="KW-0648">Protein biosynthesis</keyword>
<keyword id="KW-1185">Reference proteome</keyword>
<dbReference type="EMBL" id="CP000377">
    <property type="protein sequence ID" value="ABF64146.1"/>
    <property type="molecule type" value="Genomic_DNA"/>
</dbReference>
<dbReference type="RefSeq" id="WP_011538749.1">
    <property type="nucleotide sequence ID" value="NC_008044.1"/>
</dbReference>
<dbReference type="SMR" id="Q1GGS0"/>
<dbReference type="STRING" id="292414.TM1040_1413"/>
<dbReference type="KEGG" id="sit:TM1040_1413"/>
<dbReference type="eggNOG" id="COG0233">
    <property type="taxonomic scope" value="Bacteria"/>
</dbReference>
<dbReference type="HOGENOM" id="CLU_073981_2_0_5"/>
<dbReference type="OrthoDB" id="9804006at2"/>
<dbReference type="Proteomes" id="UP000000636">
    <property type="component" value="Chromosome"/>
</dbReference>
<dbReference type="GO" id="GO:0005829">
    <property type="term" value="C:cytosol"/>
    <property type="evidence" value="ECO:0007669"/>
    <property type="project" value="GOC"/>
</dbReference>
<dbReference type="GO" id="GO:0043023">
    <property type="term" value="F:ribosomal large subunit binding"/>
    <property type="evidence" value="ECO:0007669"/>
    <property type="project" value="TreeGrafter"/>
</dbReference>
<dbReference type="GO" id="GO:0002184">
    <property type="term" value="P:cytoplasmic translational termination"/>
    <property type="evidence" value="ECO:0007669"/>
    <property type="project" value="TreeGrafter"/>
</dbReference>
<dbReference type="CDD" id="cd00520">
    <property type="entry name" value="RRF"/>
    <property type="match status" value="1"/>
</dbReference>
<dbReference type="FunFam" id="1.10.132.20:FF:000001">
    <property type="entry name" value="Ribosome-recycling factor"/>
    <property type="match status" value="1"/>
</dbReference>
<dbReference type="FunFam" id="3.30.1360.40:FF:000001">
    <property type="entry name" value="Ribosome-recycling factor"/>
    <property type="match status" value="1"/>
</dbReference>
<dbReference type="Gene3D" id="3.30.1360.40">
    <property type="match status" value="1"/>
</dbReference>
<dbReference type="Gene3D" id="1.10.132.20">
    <property type="entry name" value="Ribosome-recycling factor"/>
    <property type="match status" value="1"/>
</dbReference>
<dbReference type="HAMAP" id="MF_00040">
    <property type="entry name" value="RRF"/>
    <property type="match status" value="1"/>
</dbReference>
<dbReference type="InterPro" id="IPR002661">
    <property type="entry name" value="Ribosome_recyc_fac"/>
</dbReference>
<dbReference type="InterPro" id="IPR023584">
    <property type="entry name" value="Ribosome_recyc_fac_dom"/>
</dbReference>
<dbReference type="InterPro" id="IPR036191">
    <property type="entry name" value="RRF_sf"/>
</dbReference>
<dbReference type="NCBIfam" id="TIGR00496">
    <property type="entry name" value="frr"/>
    <property type="match status" value="1"/>
</dbReference>
<dbReference type="PANTHER" id="PTHR20982:SF3">
    <property type="entry name" value="MITOCHONDRIAL RIBOSOME RECYCLING FACTOR PSEUDO 1"/>
    <property type="match status" value="1"/>
</dbReference>
<dbReference type="PANTHER" id="PTHR20982">
    <property type="entry name" value="RIBOSOME RECYCLING FACTOR"/>
    <property type="match status" value="1"/>
</dbReference>
<dbReference type="Pfam" id="PF01765">
    <property type="entry name" value="RRF"/>
    <property type="match status" value="1"/>
</dbReference>
<dbReference type="SUPFAM" id="SSF55194">
    <property type="entry name" value="Ribosome recycling factor, RRF"/>
    <property type="match status" value="1"/>
</dbReference>
<accession>Q1GGS0</accession>
<organism>
    <name type="scientific">Ruegeria sp. (strain TM1040)</name>
    <name type="common">Silicibacter sp.</name>
    <dbReference type="NCBI Taxonomy" id="292414"/>
    <lineage>
        <taxon>Bacteria</taxon>
        <taxon>Pseudomonadati</taxon>
        <taxon>Pseudomonadota</taxon>
        <taxon>Alphaproteobacteria</taxon>
        <taxon>Rhodobacterales</taxon>
        <taxon>Roseobacteraceae</taxon>
        <taxon>Ruegeria</taxon>
    </lineage>
</organism>